<name>RLP7_ARATH</name>
<feature type="signal peptide" evidence="1">
    <location>
        <begin position="1"/>
        <end position="24"/>
    </location>
</feature>
<feature type="chain" id="PRO_0000443338" description="Receptor-like protein 7">
    <location>
        <begin position="25"/>
        <end position="974"/>
    </location>
</feature>
<feature type="topological domain" description="Extracellular" evidence="1">
    <location>
        <begin position="25"/>
        <end position="930"/>
    </location>
</feature>
<feature type="transmembrane region" description="Helical" evidence="1">
    <location>
        <begin position="931"/>
        <end position="951"/>
    </location>
</feature>
<feature type="topological domain" description="Cytoplasmic" evidence="1">
    <location>
        <begin position="952"/>
        <end position="974"/>
    </location>
</feature>
<feature type="repeat" description="LRR 1" evidence="1">
    <location>
        <begin position="96"/>
        <end position="120"/>
    </location>
</feature>
<feature type="repeat" description="LRR 2" evidence="1">
    <location>
        <begin position="122"/>
        <end position="145"/>
    </location>
</feature>
<feature type="repeat" description="LRR 3" evidence="1">
    <location>
        <begin position="147"/>
        <end position="166"/>
    </location>
</feature>
<feature type="repeat" description="LRR 4" evidence="1">
    <location>
        <begin position="181"/>
        <end position="204"/>
    </location>
</feature>
<feature type="repeat" description="LRR 5" evidence="1">
    <location>
        <begin position="206"/>
        <end position="229"/>
    </location>
</feature>
<feature type="repeat" description="LRR 6" evidence="1">
    <location>
        <begin position="230"/>
        <end position="252"/>
    </location>
</feature>
<feature type="repeat" description="LRR 7" evidence="1">
    <location>
        <begin position="254"/>
        <end position="277"/>
    </location>
</feature>
<feature type="repeat" description="LRR 8" evidence="1">
    <location>
        <begin position="278"/>
        <end position="301"/>
    </location>
</feature>
<feature type="repeat" description="LRR 9" evidence="1">
    <location>
        <begin position="302"/>
        <end position="325"/>
    </location>
</feature>
<feature type="repeat" description="LRR 10" evidence="1">
    <location>
        <begin position="327"/>
        <end position="349"/>
    </location>
</feature>
<feature type="repeat" description="LRR 11" evidence="1">
    <location>
        <begin position="350"/>
        <end position="373"/>
    </location>
</feature>
<feature type="repeat" description="LRR 12; degenerate" evidence="5">
    <location>
        <begin position="374"/>
        <end position="396"/>
    </location>
</feature>
<feature type="repeat" description="LRR 13" evidence="1">
    <location>
        <begin position="397"/>
        <end position="422"/>
    </location>
</feature>
<feature type="repeat" description="LRR 14" evidence="1">
    <location>
        <begin position="425"/>
        <end position="448"/>
    </location>
</feature>
<feature type="repeat" description="LRR 15" evidence="1">
    <location>
        <begin position="454"/>
        <end position="472"/>
    </location>
</feature>
<feature type="repeat" description="LRR 16" evidence="1">
    <location>
        <begin position="473"/>
        <end position="495"/>
    </location>
</feature>
<feature type="repeat" description="LRR 17" evidence="1">
    <location>
        <begin position="496"/>
        <end position="519"/>
    </location>
</feature>
<feature type="repeat" description="LRR 18" evidence="1">
    <location>
        <begin position="521"/>
        <end position="542"/>
    </location>
</feature>
<feature type="repeat" description="LRR 19" evidence="1">
    <location>
        <begin position="544"/>
        <end position="570"/>
    </location>
</feature>
<feature type="repeat" description="LRR 20" evidence="1">
    <location>
        <begin position="572"/>
        <end position="589"/>
    </location>
</feature>
<feature type="repeat" description="LRR 21" evidence="1">
    <location>
        <begin position="590"/>
        <end position="616"/>
    </location>
</feature>
<feature type="repeat" description="LRR 22" evidence="1">
    <location>
        <begin position="618"/>
        <end position="638"/>
    </location>
</feature>
<feature type="repeat" description="LRR 23" evidence="1">
    <location>
        <begin position="639"/>
        <end position="662"/>
    </location>
</feature>
<feature type="repeat" description="LRR 24" evidence="1">
    <location>
        <begin position="664"/>
        <end position="685"/>
    </location>
</feature>
<feature type="repeat" description="LRR 25" evidence="1">
    <location>
        <begin position="687"/>
        <end position="712"/>
    </location>
</feature>
<feature type="repeat" description="LRR 26" evidence="1">
    <location>
        <begin position="713"/>
        <end position="737"/>
    </location>
</feature>
<feature type="repeat" description="LRR 27" evidence="1">
    <location>
        <begin position="785"/>
        <end position="809"/>
    </location>
</feature>
<feature type="repeat" description="LRR 28" evidence="1">
    <location>
        <begin position="810"/>
        <end position="833"/>
    </location>
</feature>
<feature type="repeat" description="LRR 29" evidence="1">
    <location>
        <begin position="834"/>
        <end position="857"/>
    </location>
</feature>
<feature type="repeat" description="LRR 30" evidence="1">
    <location>
        <begin position="859"/>
        <end position="882"/>
    </location>
</feature>
<feature type="region of interest" description="Disordered" evidence="3">
    <location>
        <begin position="899"/>
        <end position="923"/>
    </location>
</feature>
<feature type="glycosylation site" description="N-linked (GlcNAc...) asparagine" evidence="2">
    <location>
        <position position="54"/>
    </location>
</feature>
<feature type="glycosylation site" description="N-linked (GlcNAc...) asparagine" evidence="2">
    <location>
        <position position="90"/>
    </location>
</feature>
<feature type="glycosylation site" description="N-linked (GlcNAc...) asparagine" evidence="2">
    <location>
        <position position="253"/>
    </location>
</feature>
<feature type="glycosylation site" description="N-linked (GlcNAc...) asparagine" evidence="2">
    <location>
        <position position="279"/>
    </location>
</feature>
<feature type="glycosylation site" description="N-linked (GlcNAc...) asparagine" evidence="2">
    <location>
        <position position="300"/>
    </location>
</feature>
<feature type="glycosylation site" description="N-linked (GlcNAc...) asparagine" evidence="2">
    <location>
        <position position="348"/>
    </location>
</feature>
<feature type="glycosylation site" description="N-linked (GlcNAc...) asparagine" evidence="2">
    <location>
        <position position="434"/>
    </location>
</feature>
<feature type="glycosylation site" description="N-linked (GlcNAc...) asparagine" evidence="2">
    <location>
        <position position="466"/>
    </location>
</feature>
<feature type="glycosylation site" description="N-linked (GlcNAc...) asparagine" evidence="2">
    <location>
        <position position="484"/>
    </location>
</feature>
<feature type="glycosylation site" description="N-linked (GlcNAc...) asparagine" evidence="2">
    <location>
        <position position="529"/>
    </location>
</feature>
<feature type="glycosylation site" description="N-linked (GlcNAc...) asparagine" evidence="2">
    <location>
        <position position="577"/>
    </location>
</feature>
<feature type="glycosylation site" description="N-linked (GlcNAc...) asparagine" evidence="2">
    <location>
        <position position="603"/>
    </location>
</feature>
<feature type="glycosylation site" description="N-linked (GlcNAc...) asparagine" evidence="2">
    <location>
        <position position="624"/>
    </location>
</feature>
<feature type="glycosylation site" description="N-linked (GlcNAc...) asparagine" evidence="2">
    <location>
        <position position="637"/>
    </location>
</feature>
<feature type="glycosylation site" description="N-linked (GlcNAc...) asparagine" evidence="2">
    <location>
        <position position="737"/>
    </location>
</feature>
<feature type="glycosylation site" description="N-linked (GlcNAc...) asparagine" evidence="2">
    <location>
        <position position="816"/>
    </location>
</feature>
<feature type="glycosylation site" description="N-linked (GlcNAc...) asparagine" evidence="2">
    <location>
        <position position="845"/>
    </location>
</feature>
<feature type="glycosylation site" description="N-linked (GlcNAc...) asparagine" evidence="2">
    <location>
        <position position="864"/>
    </location>
</feature>
<sequence>MSFLIRSICFLILIPSFLITFVSATQHLCHSDQKDALLDFKNEFGMVDSKSWVNKSDCCSWDGITCDAKSGNVIGLDLSSIFLYGQLKSNSSLFKLRHLRDLNLANNNFNNSPIPAEFDKLTGLERLDLSQSSLSGQIPINLLQLTKLVSLDLSSSDFFGDESFHYLSIDKSFLPLLARNLRNLRELDMSYVKISSEIPEEFSNIRSLRSLNLNGCNLFGEFPSSILLIPNLQSIDLGNNPNLRGNLPVFHENNSLLKLTILYTSFSGAIPDSISSLKNLTSLTLSVSYFSGKIPFSLGNLSHLSHLSLSSNNLIGEIPSSIGNLNQLTNFYVGGNKLSGNLPATLSNLTKLNTISLSSNQFTGSLPPSISQLSKLKFFFADDNPFIGAILSPLLKIPSLTRIHLSYNQLNDLVGIENIFMLPNLETFYIYHYNYTKVRPLDLNVFSSLKQLGTLYISRIPISTTNITSDFPSNLEYLSLRSCNITDFPEFIRKGRNLQILDLSNNKIKGQVPDWLWRMPTLNSVDLSNNSLSGFHVSVKASPESQLTSVDLSSNAFQGPLFLPSKSLRYFSGSNNNFTGKIPRSICGLSSLEILDLSNNNLNGSLPWCLETLMSSLSDLDLRNNSLSGSLPEIFMNATKLRSLDVSHNRMEGKLPGSLTGCSSLEVLNVGSNRINDMFPFELNSLQKLQVLVLHSNKFHGTLHNVDGVWFGFPQLQIIDVSHNDFFGILPSDYFMNWTAMSSKKDNNIEPEYIQNPSVYGSSLGYYTSLVLMSKGVSMEMERVLTIYTAIDLSGNQLHGKIPDSIGLLKELRILNMSSNGFTGHIPSSLANLKNLESLDISQNNISGEIPPELGTLSSLAWINVSHNQLVGSIPQGTQFQRQKCSSYEGNPGLNGPSLENVCGHIKESTPTQTEPLETKEEEEEESFSWIAAGLGFAPGVVFGLAMGYIVVSYKHQWFMKTFGRSKQQNTRTR</sequence>
<gene>
    <name evidence="4" type="primary">RLP7</name>
    <name evidence="6" type="ordered locus">At1g47890</name>
    <name evidence="7" type="ORF">T6B12.2</name>
</gene>
<reference key="1">
    <citation type="journal article" date="2000" name="Nature">
        <title>Sequence and analysis of chromosome 1 of the plant Arabidopsis thaliana.</title>
        <authorList>
            <person name="Theologis A."/>
            <person name="Ecker J.R."/>
            <person name="Palm C.J."/>
            <person name="Federspiel N.A."/>
            <person name="Kaul S."/>
            <person name="White O."/>
            <person name="Alonso J."/>
            <person name="Altafi H."/>
            <person name="Araujo R."/>
            <person name="Bowman C.L."/>
            <person name="Brooks S.Y."/>
            <person name="Buehler E."/>
            <person name="Chan A."/>
            <person name="Chao Q."/>
            <person name="Chen H."/>
            <person name="Cheuk R.F."/>
            <person name="Chin C.W."/>
            <person name="Chung M.K."/>
            <person name="Conn L."/>
            <person name="Conway A.B."/>
            <person name="Conway A.R."/>
            <person name="Creasy T.H."/>
            <person name="Dewar K."/>
            <person name="Dunn P."/>
            <person name="Etgu P."/>
            <person name="Feldblyum T.V."/>
            <person name="Feng J.-D."/>
            <person name="Fong B."/>
            <person name="Fujii C.Y."/>
            <person name="Gill J.E."/>
            <person name="Goldsmith A.D."/>
            <person name="Haas B."/>
            <person name="Hansen N.F."/>
            <person name="Hughes B."/>
            <person name="Huizar L."/>
            <person name="Hunter J.L."/>
            <person name="Jenkins J."/>
            <person name="Johnson-Hopson C."/>
            <person name="Khan S."/>
            <person name="Khaykin E."/>
            <person name="Kim C.J."/>
            <person name="Koo H.L."/>
            <person name="Kremenetskaia I."/>
            <person name="Kurtz D.B."/>
            <person name="Kwan A."/>
            <person name="Lam B."/>
            <person name="Langin-Hooper S."/>
            <person name="Lee A."/>
            <person name="Lee J.M."/>
            <person name="Lenz C.A."/>
            <person name="Li J.H."/>
            <person name="Li Y.-P."/>
            <person name="Lin X."/>
            <person name="Liu S.X."/>
            <person name="Liu Z.A."/>
            <person name="Luros J.S."/>
            <person name="Maiti R."/>
            <person name="Marziali A."/>
            <person name="Militscher J."/>
            <person name="Miranda M."/>
            <person name="Nguyen M."/>
            <person name="Nierman W.C."/>
            <person name="Osborne B.I."/>
            <person name="Pai G."/>
            <person name="Peterson J."/>
            <person name="Pham P.K."/>
            <person name="Rizzo M."/>
            <person name="Rooney T."/>
            <person name="Rowley D."/>
            <person name="Sakano H."/>
            <person name="Salzberg S.L."/>
            <person name="Schwartz J.R."/>
            <person name="Shinn P."/>
            <person name="Southwick A.M."/>
            <person name="Sun H."/>
            <person name="Tallon L.J."/>
            <person name="Tambunga G."/>
            <person name="Toriumi M.J."/>
            <person name="Town C.D."/>
            <person name="Utterback T."/>
            <person name="Van Aken S."/>
            <person name="Vaysberg M."/>
            <person name="Vysotskaia V.S."/>
            <person name="Walker M."/>
            <person name="Wu D."/>
            <person name="Yu G."/>
            <person name="Fraser C.M."/>
            <person name="Venter J.C."/>
            <person name="Davis R.W."/>
        </authorList>
    </citation>
    <scope>NUCLEOTIDE SEQUENCE [LARGE SCALE GENOMIC DNA]</scope>
    <source>
        <strain>cv. Columbia</strain>
    </source>
</reference>
<reference key="2">
    <citation type="journal article" date="2017" name="Plant J.">
        <title>Araport11: a complete reannotation of the Arabidopsis thaliana reference genome.</title>
        <authorList>
            <person name="Cheng C.Y."/>
            <person name="Krishnakumar V."/>
            <person name="Chan A.P."/>
            <person name="Thibaud-Nissen F."/>
            <person name="Schobel S."/>
            <person name="Town C.D."/>
        </authorList>
    </citation>
    <scope>GENOME REANNOTATION</scope>
    <source>
        <strain>cv. Columbia</strain>
    </source>
</reference>
<reference key="3">
    <citation type="journal article" date="2005" name="Plant Physiol.">
        <title>Phylogenomic analysis of the receptor-like proteins of rice and Arabidopsis.</title>
        <authorList>
            <person name="Fritz-Laylin L.K."/>
            <person name="Krishnamurthy N."/>
            <person name="Toer M."/>
            <person name="Sjoelander K.V."/>
            <person name="Jones J.D."/>
        </authorList>
    </citation>
    <scope>GENE FAMILY</scope>
</reference>
<reference key="4">
    <citation type="journal article" date="2008" name="Plant Physiol.">
        <title>A genome-wide functional investigation into the roles of receptor-like proteins in Arabidopsis.</title>
        <authorList>
            <person name="Wang G."/>
            <person name="Ellendorff U."/>
            <person name="Kemp B."/>
            <person name="Mansfield J.W."/>
            <person name="Forsyth A."/>
            <person name="Mitchell K."/>
            <person name="Bastas K."/>
            <person name="Liu C.-M."/>
            <person name="Woods-Toer A."/>
            <person name="Zipfel C."/>
            <person name="de Wit P.J.G.M."/>
            <person name="Jones J.D.G."/>
            <person name="Toer M."/>
            <person name="Thomma B.P.H.J."/>
        </authorList>
    </citation>
    <scope>GENE FAMILY</scope>
    <scope>NOMENCLATURE</scope>
</reference>
<accession>Q9C699</accession>
<organism>
    <name type="scientific">Arabidopsis thaliana</name>
    <name type="common">Mouse-ear cress</name>
    <dbReference type="NCBI Taxonomy" id="3702"/>
    <lineage>
        <taxon>Eukaryota</taxon>
        <taxon>Viridiplantae</taxon>
        <taxon>Streptophyta</taxon>
        <taxon>Embryophyta</taxon>
        <taxon>Tracheophyta</taxon>
        <taxon>Spermatophyta</taxon>
        <taxon>Magnoliopsida</taxon>
        <taxon>eudicotyledons</taxon>
        <taxon>Gunneridae</taxon>
        <taxon>Pentapetalae</taxon>
        <taxon>rosids</taxon>
        <taxon>malvids</taxon>
        <taxon>Brassicales</taxon>
        <taxon>Brassicaceae</taxon>
        <taxon>Camelineae</taxon>
        <taxon>Arabidopsis</taxon>
    </lineage>
</organism>
<dbReference type="EMBL" id="AC079679">
    <property type="protein sequence ID" value="AAG51781.1"/>
    <property type="status" value="ALT_INIT"/>
    <property type="molecule type" value="Genomic_DNA"/>
</dbReference>
<dbReference type="EMBL" id="CP002684">
    <property type="protein sequence ID" value="AEE32225.1"/>
    <property type="status" value="ALT_INIT"/>
    <property type="molecule type" value="Genomic_DNA"/>
</dbReference>
<dbReference type="PIR" id="C96519">
    <property type="entry name" value="C96519"/>
</dbReference>
<dbReference type="RefSeq" id="NP_175225.1">
    <property type="nucleotide sequence ID" value="NM_103687.2"/>
</dbReference>
<dbReference type="SMR" id="Q9C699"/>
<dbReference type="STRING" id="3702.Q9C699"/>
<dbReference type="GlyCosmos" id="Q9C699">
    <property type="glycosylation" value="18 sites, No reported glycans"/>
</dbReference>
<dbReference type="GlyGen" id="Q9C699">
    <property type="glycosylation" value="18 sites"/>
</dbReference>
<dbReference type="PaxDb" id="3702-AT1G47890.1"/>
<dbReference type="ProteomicsDB" id="228121"/>
<dbReference type="GeneID" id="841206"/>
<dbReference type="KEGG" id="ath:AT1G47890"/>
<dbReference type="Araport" id="AT1G47890"/>
<dbReference type="TAIR" id="AT1G47890"/>
<dbReference type="eggNOG" id="KOG0619">
    <property type="taxonomic scope" value="Eukaryota"/>
</dbReference>
<dbReference type="HOGENOM" id="CLU_000288_18_3_1"/>
<dbReference type="InParanoid" id="Q9C699"/>
<dbReference type="PhylomeDB" id="Q9C699"/>
<dbReference type="PRO" id="PR:Q9C699"/>
<dbReference type="Proteomes" id="UP000006548">
    <property type="component" value="Chromosome 1"/>
</dbReference>
<dbReference type="ExpressionAtlas" id="Q9C699">
    <property type="expression patterns" value="baseline and differential"/>
</dbReference>
<dbReference type="GO" id="GO:0005886">
    <property type="term" value="C:plasma membrane"/>
    <property type="evidence" value="ECO:0007669"/>
    <property type="project" value="UniProtKB-SubCell"/>
</dbReference>
<dbReference type="FunFam" id="3.80.10.10:FF:000041">
    <property type="entry name" value="LRR receptor-like serine/threonine-protein kinase ERECTA"/>
    <property type="match status" value="1"/>
</dbReference>
<dbReference type="FunFam" id="3.80.10.10:FF:000111">
    <property type="entry name" value="LRR receptor-like serine/threonine-protein kinase ERECTA"/>
    <property type="match status" value="1"/>
</dbReference>
<dbReference type="FunFam" id="3.80.10.10:FF:000095">
    <property type="entry name" value="LRR receptor-like serine/threonine-protein kinase GSO1"/>
    <property type="match status" value="1"/>
</dbReference>
<dbReference type="Gene3D" id="3.80.10.10">
    <property type="entry name" value="Ribonuclease Inhibitor"/>
    <property type="match status" value="5"/>
</dbReference>
<dbReference type="InterPro" id="IPR001611">
    <property type="entry name" value="Leu-rich_rpt"/>
</dbReference>
<dbReference type="InterPro" id="IPR003591">
    <property type="entry name" value="Leu-rich_rpt_typical-subtyp"/>
</dbReference>
<dbReference type="InterPro" id="IPR032675">
    <property type="entry name" value="LRR_dom_sf"/>
</dbReference>
<dbReference type="InterPro" id="IPR013210">
    <property type="entry name" value="LRR_N_plant-typ"/>
</dbReference>
<dbReference type="InterPro" id="IPR055414">
    <property type="entry name" value="LRR_R13L4/SHOC2-like"/>
</dbReference>
<dbReference type="InterPro" id="IPR046956">
    <property type="entry name" value="RLP23-like"/>
</dbReference>
<dbReference type="PANTHER" id="PTHR48061">
    <property type="entry name" value="LEUCINE-RICH REPEAT RECEPTOR PROTEIN KINASE EMS1-LIKE-RELATED"/>
    <property type="match status" value="1"/>
</dbReference>
<dbReference type="PANTHER" id="PTHR48061:SF46">
    <property type="entry name" value="LEUCINE-RICH REPEAT-CONTAINING N-TERMINAL PLANT-TYPE DOMAIN-CONTAINING PROTEIN"/>
    <property type="match status" value="1"/>
</dbReference>
<dbReference type="Pfam" id="PF00560">
    <property type="entry name" value="LRR_1"/>
    <property type="match status" value="3"/>
</dbReference>
<dbReference type="Pfam" id="PF23598">
    <property type="entry name" value="LRR_14"/>
    <property type="match status" value="2"/>
</dbReference>
<dbReference type="Pfam" id="PF13855">
    <property type="entry name" value="LRR_8"/>
    <property type="match status" value="2"/>
</dbReference>
<dbReference type="Pfam" id="PF08263">
    <property type="entry name" value="LRRNT_2"/>
    <property type="match status" value="1"/>
</dbReference>
<dbReference type="PRINTS" id="PR00019">
    <property type="entry name" value="LEURICHRPT"/>
</dbReference>
<dbReference type="SMART" id="SM00365">
    <property type="entry name" value="LRR_SD22"/>
    <property type="match status" value="4"/>
</dbReference>
<dbReference type="SMART" id="SM00369">
    <property type="entry name" value="LRR_TYP"/>
    <property type="match status" value="13"/>
</dbReference>
<dbReference type="SUPFAM" id="SSF52058">
    <property type="entry name" value="L domain-like"/>
    <property type="match status" value="1"/>
</dbReference>
<dbReference type="SUPFAM" id="SSF52047">
    <property type="entry name" value="RNI-like"/>
    <property type="match status" value="1"/>
</dbReference>
<dbReference type="PROSITE" id="PS51450">
    <property type="entry name" value="LRR"/>
    <property type="match status" value="20"/>
</dbReference>
<protein>
    <recommendedName>
        <fullName evidence="4">Receptor-like protein 7</fullName>
        <shortName evidence="4">AtRLP7</shortName>
    </recommendedName>
</protein>
<proteinExistence type="inferred from homology"/>
<evidence type="ECO:0000255" key="1"/>
<evidence type="ECO:0000255" key="2">
    <source>
        <dbReference type="PROSITE-ProRule" id="PRU00498"/>
    </source>
</evidence>
<evidence type="ECO:0000256" key="3">
    <source>
        <dbReference type="SAM" id="MobiDB-lite"/>
    </source>
</evidence>
<evidence type="ECO:0000303" key="4">
    <source>
    </source>
</evidence>
<evidence type="ECO:0000305" key="5"/>
<evidence type="ECO:0000312" key="6">
    <source>
        <dbReference type="Araport" id="AT1G47890"/>
    </source>
</evidence>
<evidence type="ECO:0000312" key="7">
    <source>
        <dbReference type="EMBL" id="AAG51781.1"/>
    </source>
</evidence>
<keyword id="KW-1003">Cell membrane</keyword>
<keyword id="KW-0325">Glycoprotein</keyword>
<keyword id="KW-0433">Leucine-rich repeat</keyword>
<keyword id="KW-0472">Membrane</keyword>
<keyword id="KW-0675">Receptor</keyword>
<keyword id="KW-1185">Reference proteome</keyword>
<keyword id="KW-0677">Repeat</keyword>
<keyword id="KW-0732">Signal</keyword>
<keyword id="KW-0812">Transmembrane</keyword>
<keyword id="KW-1133">Transmembrane helix</keyword>
<comment type="subcellular location">
    <subcellularLocation>
        <location evidence="5">Cell membrane</location>
        <topology evidence="5">Single-pass type I membrane protein</topology>
    </subcellularLocation>
</comment>
<comment type="similarity">
    <text evidence="5">Belongs to the RLP family.</text>
</comment>
<comment type="sequence caution" evidence="5">
    <conflict type="erroneous initiation">
        <sequence resource="EMBL-CDS" id="AAG51781"/>
    </conflict>
    <text>Extended N-terminus.</text>
</comment>
<comment type="sequence caution" evidence="5">
    <conflict type="erroneous initiation">
        <sequence resource="EMBL-CDS" id="AEE32225"/>
    </conflict>
    <text>Extended N-terminus.</text>
</comment>